<sequence>MSSPDAGYASDDQSQTQSALPAVMAGLGPCPWAESLSPIGDMKVKGEAPANSGAPAGAAGRAKGESRIRRPMNAFMVWAKDERKRLAQQNPDLHNAELSKMLGKSWKALTLAEKRPFVEEAERLRVQHMQDHPNYKYRPRRRKQVKRLKRVEGGFLHGLAEPQAAALGPEGGRVAMDGLGLQFPEQGFPAGPPLLPPHMGGHYRDCQSLGAPPLDGYPLPTPDTSPLDGVDPDPAFFAAPMPGDCPAAGTYSYAQVSDYAGPPEPPAGPMHPRLGPEPAGPSIPGLLAPPSALHVYYGAMGSPGAGGGRGFQMQPQHQHQHQHQHHPPGPGQPSPPPEALPCRDGTDPSQPAELLGEVDRTEFEQYLHFVCKPEMGLPYQGHDSGVNLPDSHGAISSVVSDASSAVYYCNYPDV</sequence>
<reference key="1">
    <citation type="journal article" date="2002" name="Int. J. Mol. Med.">
        <title>Molecular cloning and characterization of human SOX17.</title>
        <authorList>
            <person name="Katoh M."/>
        </authorList>
    </citation>
    <scope>NUCLEOTIDE SEQUENCE [MRNA]</scope>
    <scope>TISSUE SPECIFICITY</scope>
</reference>
<reference key="2">
    <citation type="journal article" date="2004" name="Nat. Genet.">
        <title>Complete sequencing and characterization of 21,243 full-length human cDNAs.</title>
        <authorList>
            <person name="Ota T."/>
            <person name="Suzuki Y."/>
            <person name="Nishikawa T."/>
            <person name="Otsuki T."/>
            <person name="Sugiyama T."/>
            <person name="Irie R."/>
            <person name="Wakamatsu A."/>
            <person name="Hayashi K."/>
            <person name="Sato H."/>
            <person name="Nagai K."/>
            <person name="Kimura K."/>
            <person name="Makita H."/>
            <person name="Sekine M."/>
            <person name="Obayashi M."/>
            <person name="Nishi T."/>
            <person name="Shibahara T."/>
            <person name="Tanaka T."/>
            <person name="Ishii S."/>
            <person name="Yamamoto J."/>
            <person name="Saito K."/>
            <person name="Kawai Y."/>
            <person name="Isono Y."/>
            <person name="Nakamura Y."/>
            <person name="Nagahari K."/>
            <person name="Murakami K."/>
            <person name="Yasuda T."/>
            <person name="Iwayanagi T."/>
            <person name="Wagatsuma M."/>
            <person name="Shiratori A."/>
            <person name="Sudo H."/>
            <person name="Hosoiri T."/>
            <person name="Kaku Y."/>
            <person name="Kodaira H."/>
            <person name="Kondo H."/>
            <person name="Sugawara M."/>
            <person name="Takahashi M."/>
            <person name="Kanda K."/>
            <person name="Yokoi T."/>
            <person name="Furuya T."/>
            <person name="Kikkawa E."/>
            <person name="Omura Y."/>
            <person name="Abe K."/>
            <person name="Kamihara K."/>
            <person name="Katsuta N."/>
            <person name="Sato K."/>
            <person name="Tanikawa M."/>
            <person name="Yamazaki M."/>
            <person name="Ninomiya K."/>
            <person name="Ishibashi T."/>
            <person name="Yamashita H."/>
            <person name="Murakawa K."/>
            <person name="Fujimori K."/>
            <person name="Tanai H."/>
            <person name="Kimata M."/>
            <person name="Watanabe M."/>
            <person name="Hiraoka S."/>
            <person name="Chiba Y."/>
            <person name="Ishida S."/>
            <person name="Ono Y."/>
            <person name="Takiguchi S."/>
            <person name="Watanabe S."/>
            <person name="Yosida M."/>
            <person name="Hotuta T."/>
            <person name="Kusano J."/>
            <person name="Kanehori K."/>
            <person name="Takahashi-Fujii A."/>
            <person name="Hara H."/>
            <person name="Tanase T.-O."/>
            <person name="Nomura Y."/>
            <person name="Togiya S."/>
            <person name="Komai F."/>
            <person name="Hara R."/>
            <person name="Takeuchi K."/>
            <person name="Arita M."/>
            <person name="Imose N."/>
            <person name="Musashino K."/>
            <person name="Yuuki H."/>
            <person name="Oshima A."/>
            <person name="Sasaki N."/>
            <person name="Aotsuka S."/>
            <person name="Yoshikawa Y."/>
            <person name="Matsunawa H."/>
            <person name="Ichihara T."/>
            <person name="Shiohata N."/>
            <person name="Sano S."/>
            <person name="Moriya S."/>
            <person name="Momiyama H."/>
            <person name="Satoh N."/>
            <person name="Takami S."/>
            <person name="Terashima Y."/>
            <person name="Suzuki O."/>
            <person name="Nakagawa S."/>
            <person name="Senoh A."/>
            <person name="Mizoguchi H."/>
            <person name="Goto Y."/>
            <person name="Shimizu F."/>
            <person name="Wakebe H."/>
            <person name="Hishigaki H."/>
            <person name="Watanabe T."/>
            <person name="Sugiyama A."/>
            <person name="Takemoto M."/>
            <person name="Kawakami B."/>
            <person name="Yamazaki M."/>
            <person name="Watanabe K."/>
            <person name="Kumagai A."/>
            <person name="Itakura S."/>
            <person name="Fukuzumi Y."/>
            <person name="Fujimori Y."/>
            <person name="Komiyama M."/>
            <person name="Tashiro H."/>
            <person name="Tanigami A."/>
            <person name="Fujiwara T."/>
            <person name="Ono T."/>
            <person name="Yamada K."/>
            <person name="Fujii Y."/>
            <person name="Ozaki K."/>
            <person name="Hirao M."/>
            <person name="Ohmori Y."/>
            <person name="Kawabata A."/>
            <person name="Hikiji T."/>
            <person name="Kobatake N."/>
            <person name="Inagaki H."/>
            <person name="Ikema Y."/>
            <person name="Okamoto S."/>
            <person name="Okitani R."/>
            <person name="Kawakami T."/>
            <person name="Noguchi S."/>
            <person name="Itoh T."/>
            <person name="Shigeta K."/>
            <person name="Senba T."/>
            <person name="Matsumura K."/>
            <person name="Nakajima Y."/>
            <person name="Mizuno T."/>
            <person name="Morinaga M."/>
            <person name="Sasaki M."/>
            <person name="Togashi T."/>
            <person name="Oyama M."/>
            <person name="Hata H."/>
            <person name="Watanabe M."/>
            <person name="Komatsu T."/>
            <person name="Mizushima-Sugano J."/>
            <person name="Satoh T."/>
            <person name="Shirai Y."/>
            <person name="Takahashi Y."/>
            <person name="Nakagawa K."/>
            <person name="Okumura K."/>
            <person name="Nagase T."/>
            <person name="Nomura N."/>
            <person name="Kikuchi H."/>
            <person name="Masuho Y."/>
            <person name="Yamashita R."/>
            <person name="Nakai K."/>
            <person name="Yada T."/>
            <person name="Nakamura Y."/>
            <person name="Ohara O."/>
            <person name="Isogai T."/>
            <person name="Sugano S."/>
        </authorList>
    </citation>
    <scope>NUCLEOTIDE SEQUENCE [LARGE SCALE MRNA]</scope>
</reference>
<reference key="3">
    <citation type="journal article" date="2021" name="Stem. Cell. Rev. Rep.">
        <title>The 9aaTAD Activation Domains in the Yamanaka Transcription Factors Oct4, Sox2, Myc, and Klf4.</title>
        <authorList>
            <person name="Piskacek M."/>
            <person name="Otasevic T."/>
            <person name="Repko M."/>
            <person name="Knight A."/>
        </authorList>
    </citation>
    <scope>9AATAD MOTIF</scope>
</reference>
<reference key="4">
    <citation type="submission" date="2008-04" db="PDB data bank">
        <title>Solution structure of the HMG box of human transcription factor SOX-17.</title>
        <authorList>
            <consortium name="RIKEN structural genomics initiative (RSGI)"/>
        </authorList>
    </citation>
    <scope>STRUCTURE BY NMR OF 62-139</scope>
</reference>
<reference key="5">
    <citation type="journal article" date="2010" name="Hum. Mutat.">
        <title>Mutations in SOX17 are associated with congenital anomalies of the kidney and the urinary tract.</title>
        <authorList>
            <person name="Gimelli S."/>
            <person name="Caridi G."/>
            <person name="Beri S."/>
            <person name="McCracken K."/>
            <person name="Bocciardi R."/>
            <person name="Zordan P."/>
            <person name="Dagnino M."/>
            <person name="Fiorio P."/>
            <person name="Murer L."/>
            <person name="Benetti E."/>
            <person name="Zuffardi O."/>
            <person name="Giorda R."/>
            <person name="Wells J.M."/>
            <person name="Gimelli G."/>
            <person name="Ghiggeri G.M."/>
        </authorList>
    </citation>
    <scope>VARIANTS VUR3 THR-GLN-17 INS; CYS-178 AND ASN-259</scope>
</reference>
<reference key="6">
    <citation type="journal article" date="2016" name="Eur. J. Med. Genet.">
        <title>Whole exome sequencing identifies a homozygous POLG2 missense variant in an infant with fulminant hepatic failure and mitochondrial DNA depletion.</title>
        <authorList>
            <person name="Varma H."/>
            <person name="Faust P.L."/>
            <person name="Iglesias A.D."/>
            <person name="Lagana S.M."/>
            <person name="Wou K."/>
            <person name="Hirano M."/>
            <person name="DiMauro S."/>
            <person name="Mansukani M.M."/>
            <person name="Hoff K.E."/>
            <person name="Nagy P.L."/>
            <person name="Copeland W.C."/>
            <person name="Naini A.B."/>
        </authorList>
    </citation>
    <scope>VARIANT ASP-33</scope>
</reference>
<name>SOX17_HUMAN</name>
<comment type="function">
    <text evidence="1">Acts as a transcription regulator that binds target promoter DNA and bends the DNA. Binds to the sequences 5'-AACAAT-'3 or 5'-AACAAAG-3'. Modulates transcriptional regulation via WNT3A. Inhibits Wnt signaling. Promotes degradation of activated CTNNB1. Plays a key role in the regulation of embryonic development. Required for normal development of the definitive gut endoderm. Required for normal looping of the embryonic heart tube. Plays an important role in embryonic and postnatal vascular development, including development of arteries. Plays an important role in postnatal angiogenesis, where it is functionally redundant with SOX18. Required for the generation and maintenance of fetal hematopoietic stem cells, and for fetal hematopoiesis. Probable transcriptional activator in the premeiotic germ cells.</text>
</comment>
<comment type="subunit">
    <text evidence="1">Interacts with CTNNB1, LEF1 and TCF4.</text>
</comment>
<comment type="interaction">
    <interactant intactId="EBI-9106753">
        <id>Q9H6I2</id>
    </interactant>
    <interactant intactId="EBI-491549">
        <id>P35222</id>
        <label>CTNNB1</label>
    </interactant>
    <organismsDiffer>false</organismsDiffer>
    <experiments>2</experiments>
</comment>
<comment type="subcellular location">
    <subcellularLocation>
        <location evidence="2">Nucleus</location>
    </subcellularLocation>
</comment>
<comment type="tissue specificity">
    <text evidence="5">Expressed in adult heart, lung, spleen, testis, ovary, placenta, fetal lung, and kidney. In normal gastrointestinal tract, it is preferentially expressed in esophagus, stomach and small intestine than in colon and rectum.</text>
</comment>
<comment type="domain">
    <text evidence="8">The 9aaTAD motif is a transactivation domain present in a large number of yeast and animal transcription factors.</text>
</comment>
<comment type="disease" evidence="6">
    <disease id="DI-02977">
        <name>Vesicoureteral reflux 3</name>
        <acronym>VUR3</acronym>
        <description>A disease belonging to the group of congenital anomalies of the kidney and urinary tract. It is characterized by the reflux of urine from the bladder into the ureters and sometimes into the kidneys, and is a risk factor for urinary tract infections. Primary disease results from a developmental defect of the ureterovesical junction. In combination with intrarenal reflux, the resulting inflammatory reaction may result in renal injury or scarring, also called reflux nephropathy. Extensive renal scarring impairs renal function and may predispose patients to hypertension, proteinuria, renal insufficiency and end-stage renal disease.</description>
        <dbReference type="MIM" id="613674"/>
    </disease>
    <text>The disease is caused by variants affecting the gene represented in this entry.</text>
</comment>
<evidence type="ECO:0000250" key="1">
    <source>
        <dbReference type="UniProtKB" id="Q61473"/>
    </source>
</evidence>
<evidence type="ECO:0000255" key="2">
    <source>
        <dbReference type="PROSITE-ProRule" id="PRU00267"/>
    </source>
</evidence>
<evidence type="ECO:0000255" key="3">
    <source>
        <dbReference type="PROSITE-ProRule" id="PRU00849"/>
    </source>
</evidence>
<evidence type="ECO:0000256" key="4">
    <source>
        <dbReference type="SAM" id="MobiDB-lite"/>
    </source>
</evidence>
<evidence type="ECO:0000269" key="5">
    <source>
    </source>
</evidence>
<evidence type="ECO:0000269" key="6">
    <source>
    </source>
</evidence>
<evidence type="ECO:0000269" key="7">
    <source>
    </source>
</evidence>
<evidence type="ECO:0000269" key="8">
    <source>
    </source>
</evidence>
<evidence type="ECO:0007829" key="9">
    <source>
        <dbReference type="PDB" id="4A3N"/>
    </source>
</evidence>
<proteinExistence type="evidence at protein level"/>
<organism>
    <name type="scientific">Homo sapiens</name>
    <name type="common">Human</name>
    <dbReference type="NCBI Taxonomy" id="9606"/>
    <lineage>
        <taxon>Eukaryota</taxon>
        <taxon>Metazoa</taxon>
        <taxon>Chordata</taxon>
        <taxon>Craniata</taxon>
        <taxon>Vertebrata</taxon>
        <taxon>Euteleostomi</taxon>
        <taxon>Mammalia</taxon>
        <taxon>Eutheria</taxon>
        <taxon>Euarchontoglires</taxon>
        <taxon>Primates</taxon>
        <taxon>Haplorrhini</taxon>
        <taxon>Catarrhini</taxon>
        <taxon>Hominidae</taxon>
        <taxon>Homo</taxon>
    </lineage>
</organism>
<accession>Q9H6I2</accession>
<dbReference type="EMBL" id="AB073988">
    <property type="protein sequence ID" value="BAB83867.1"/>
    <property type="molecule type" value="mRNA"/>
</dbReference>
<dbReference type="EMBL" id="AK025905">
    <property type="protein sequence ID" value="BAB15277.1"/>
    <property type="molecule type" value="mRNA"/>
</dbReference>
<dbReference type="CCDS" id="CCDS6159.1"/>
<dbReference type="RefSeq" id="NP_071899.1">
    <property type="nucleotide sequence ID" value="NM_022454.4"/>
</dbReference>
<dbReference type="PDB" id="2YUL">
    <property type="method" value="NMR"/>
    <property type="chains" value="A=68-136"/>
</dbReference>
<dbReference type="PDB" id="4A3N">
    <property type="method" value="X-ray"/>
    <property type="resolution" value="2.40 A"/>
    <property type="chains" value="A=68-136"/>
</dbReference>
<dbReference type="PDBsum" id="2YUL"/>
<dbReference type="PDBsum" id="4A3N"/>
<dbReference type="SMR" id="Q9H6I2"/>
<dbReference type="BioGRID" id="122134">
    <property type="interactions" value="80"/>
</dbReference>
<dbReference type="FunCoup" id="Q9H6I2">
    <property type="interactions" value="379"/>
</dbReference>
<dbReference type="IntAct" id="Q9H6I2">
    <property type="interactions" value="81"/>
</dbReference>
<dbReference type="STRING" id="9606.ENSP00000297316"/>
<dbReference type="ChEMBL" id="CHEMBL4523455"/>
<dbReference type="GlyGen" id="Q9H6I2">
    <property type="glycosylation" value="1 site"/>
</dbReference>
<dbReference type="iPTMnet" id="Q9H6I2"/>
<dbReference type="PhosphoSitePlus" id="Q9H6I2"/>
<dbReference type="BioMuta" id="SOX17"/>
<dbReference type="DMDM" id="23822216"/>
<dbReference type="jPOST" id="Q9H6I2"/>
<dbReference type="MassIVE" id="Q9H6I2"/>
<dbReference type="PaxDb" id="9606-ENSP00000297316"/>
<dbReference type="PeptideAtlas" id="Q9H6I2"/>
<dbReference type="ProteomicsDB" id="80988"/>
<dbReference type="Pumba" id="Q9H6I2"/>
<dbReference type="Antibodypedia" id="11698">
    <property type="antibodies" value="466 antibodies from 43 providers"/>
</dbReference>
<dbReference type="DNASU" id="64321"/>
<dbReference type="Ensembl" id="ENST00000297316.5">
    <property type="protein sequence ID" value="ENSP00000297316.4"/>
    <property type="gene ID" value="ENSG00000164736.6"/>
</dbReference>
<dbReference type="GeneID" id="64321"/>
<dbReference type="KEGG" id="hsa:64321"/>
<dbReference type="MANE-Select" id="ENST00000297316.5">
    <property type="protein sequence ID" value="ENSP00000297316.4"/>
    <property type="RefSeq nucleotide sequence ID" value="NM_022454.4"/>
    <property type="RefSeq protein sequence ID" value="NP_071899.1"/>
</dbReference>
<dbReference type="UCSC" id="uc003xsb.5">
    <property type="organism name" value="human"/>
</dbReference>
<dbReference type="AGR" id="HGNC:18122"/>
<dbReference type="CTD" id="64321"/>
<dbReference type="DisGeNET" id="64321"/>
<dbReference type="GeneCards" id="SOX17"/>
<dbReference type="HGNC" id="HGNC:18122">
    <property type="gene designation" value="SOX17"/>
</dbReference>
<dbReference type="HPA" id="ENSG00000164736">
    <property type="expression patterns" value="Tissue enhanced (adipose)"/>
</dbReference>
<dbReference type="MalaCards" id="SOX17"/>
<dbReference type="MIM" id="610928">
    <property type="type" value="gene"/>
</dbReference>
<dbReference type="MIM" id="613674">
    <property type="type" value="phenotype"/>
</dbReference>
<dbReference type="neXtProt" id="NX_Q9H6I2"/>
<dbReference type="OpenTargets" id="ENSG00000164736"/>
<dbReference type="Orphanet" id="289365">
    <property type="disease" value="Familial vesicoureteral reflux"/>
</dbReference>
<dbReference type="Orphanet" id="275777">
    <property type="disease" value="Heritable pulmonary arterial hypertension"/>
</dbReference>
<dbReference type="PharmGKB" id="PA38296"/>
<dbReference type="VEuPathDB" id="HostDB:ENSG00000164736"/>
<dbReference type="eggNOG" id="KOG0527">
    <property type="taxonomic scope" value="Eukaryota"/>
</dbReference>
<dbReference type="GeneTree" id="ENSGT00940000156694"/>
<dbReference type="HOGENOM" id="CLU_044994_0_1_1"/>
<dbReference type="InParanoid" id="Q9H6I2"/>
<dbReference type="OMA" id="HYRDCQS"/>
<dbReference type="OrthoDB" id="6247875at2759"/>
<dbReference type="PAN-GO" id="Q9H6I2">
    <property type="GO annotations" value="7 GO annotations based on evolutionary models"/>
</dbReference>
<dbReference type="PhylomeDB" id="Q9H6I2"/>
<dbReference type="PathwayCommons" id="Q9H6I2"/>
<dbReference type="Reactome" id="R-HSA-3769402">
    <property type="pathway name" value="Deactivation of the beta-catenin transactivating complex"/>
</dbReference>
<dbReference type="Reactome" id="R-HSA-9823730">
    <property type="pathway name" value="Formation of definitive endoderm"/>
</dbReference>
<dbReference type="Reactome" id="R-HSA-9827857">
    <property type="pathway name" value="Specification of primordial germ cells"/>
</dbReference>
<dbReference type="Reactome" id="R-HSA-9925561">
    <property type="pathway name" value="Developmental Lineage of Pancreatic Acinar Cells"/>
</dbReference>
<dbReference type="SignaLink" id="Q9H6I2"/>
<dbReference type="SIGNOR" id="Q9H6I2"/>
<dbReference type="BioGRID-ORCS" id="64321">
    <property type="hits" value="23 hits in 1179 CRISPR screens"/>
</dbReference>
<dbReference type="EvolutionaryTrace" id="Q9H6I2"/>
<dbReference type="GenomeRNAi" id="64321"/>
<dbReference type="Pharos" id="Q9H6I2">
    <property type="development level" value="Tbio"/>
</dbReference>
<dbReference type="PRO" id="PR:Q9H6I2"/>
<dbReference type="Proteomes" id="UP000005640">
    <property type="component" value="Chromosome 8"/>
</dbReference>
<dbReference type="RNAct" id="Q9H6I2">
    <property type="molecule type" value="protein"/>
</dbReference>
<dbReference type="Bgee" id="ENSG00000164736">
    <property type="expression patterns" value="Expressed in endothelial cell and 123 other cell types or tissues"/>
</dbReference>
<dbReference type="GO" id="GO:0000785">
    <property type="term" value="C:chromatin"/>
    <property type="evidence" value="ECO:0000247"/>
    <property type="project" value="NTNU_SB"/>
</dbReference>
<dbReference type="GO" id="GO:0005654">
    <property type="term" value="C:nucleoplasm"/>
    <property type="evidence" value="ECO:0000304"/>
    <property type="project" value="Reactome"/>
</dbReference>
<dbReference type="GO" id="GO:0005634">
    <property type="term" value="C:nucleus"/>
    <property type="evidence" value="ECO:0000314"/>
    <property type="project" value="UniProtKB"/>
</dbReference>
<dbReference type="GO" id="GO:0005667">
    <property type="term" value="C:transcription regulator complex"/>
    <property type="evidence" value="ECO:0000314"/>
    <property type="project" value="BHF-UCL"/>
</dbReference>
<dbReference type="GO" id="GO:0008013">
    <property type="term" value="F:beta-catenin binding"/>
    <property type="evidence" value="ECO:0000353"/>
    <property type="project" value="BHF-UCL"/>
</dbReference>
<dbReference type="GO" id="GO:0001228">
    <property type="term" value="F:DNA-binding transcription activator activity, RNA polymerase II-specific"/>
    <property type="evidence" value="ECO:0000250"/>
    <property type="project" value="ARUK-UCL"/>
</dbReference>
<dbReference type="GO" id="GO:0000981">
    <property type="term" value="F:DNA-binding transcription factor activity, RNA polymerase II-specific"/>
    <property type="evidence" value="ECO:0000250"/>
    <property type="project" value="BHF-UCL"/>
</dbReference>
<dbReference type="GO" id="GO:0000978">
    <property type="term" value="F:RNA polymerase II cis-regulatory region sequence-specific DNA binding"/>
    <property type="evidence" value="ECO:0000318"/>
    <property type="project" value="GO_Central"/>
</dbReference>
<dbReference type="GO" id="GO:0061629">
    <property type="term" value="F:RNA polymerase II-specific DNA-binding transcription factor binding"/>
    <property type="evidence" value="ECO:0000353"/>
    <property type="project" value="BHF-UCL"/>
</dbReference>
<dbReference type="GO" id="GO:0000976">
    <property type="term" value="F:transcription cis-regulatory region binding"/>
    <property type="evidence" value="ECO:0000250"/>
    <property type="project" value="UniProtKB"/>
</dbReference>
<dbReference type="GO" id="GO:0001525">
    <property type="term" value="P:angiogenesis"/>
    <property type="evidence" value="ECO:0000250"/>
    <property type="project" value="BHF-UCL"/>
</dbReference>
<dbReference type="GO" id="GO:0060913">
    <property type="term" value="P:cardiac cell fate determination"/>
    <property type="evidence" value="ECO:0000315"/>
    <property type="project" value="BHF-UCL"/>
</dbReference>
<dbReference type="GO" id="GO:0003142">
    <property type="term" value="P:cardiogenic plate morphogenesis"/>
    <property type="evidence" value="ECO:0000250"/>
    <property type="project" value="BHF-UCL"/>
</dbReference>
<dbReference type="GO" id="GO:0042074">
    <property type="term" value="P:cell migration involved in gastrulation"/>
    <property type="evidence" value="ECO:0007669"/>
    <property type="project" value="Ensembl"/>
</dbReference>
<dbReference type="GO" id="GO:1990830">
    <property type="term" value="P:cellular response to leukemia inhibitory factor"/>
    <property type="evidence" value="ECO:0007669"/>
    <property type="project" value="Ensembl"/>
</dbReference>
<dbReference type="GO" id="GO:0061009">
    <property type="term" value="P:common bile duct development"/>
    <property type="evidence" value="ECO:0007669"/>
    <property type="project" value="Ensembl"/>
</dbReference>
<dbReference type="GO" id="GO:0048617">
    <property type="term" value="P:embryonic foregut morphogenesis"/>
    <property type="evidence" value="ECO:0000250"/>
    <property type="project" value="BHF-UCL"/>
</dbReference>
<dbReference type="GO" id="GO:0035050">
    <property type="term" value="P:embryonic heart tube development"/>
    <property type="evidence" value="ECO:0000250"/>
    <property type="project" value="BHF-UCL"/>
</dbReference>
<dbReference type="GO" id="GO:0003143">
    <property type="term" value="P:embryonic heart tube morphogenesis"/>
    <property type="evidence" value="ECO:0000250"/>
    <property type="project" value="BHF-UCL"/>
</dbReference>
<dbReference type="GO" id="GO:0060956">
    <property type="term" value="P:endocardial cell differentiation"/>
    <property type="evidence" value="ECO:0000250"/>
    <property type="project" value="BHF-UCL"/>
</dbReference>
<dbReference type="GO" id="GO:0060214">
    <property type="term" value="P:endocardium formation"/>
    <property type="evidence" value="ECO:0000250"/>
    <property type="project" value="BHF-UCL"/>
</dbReference>
<dbReference type="GO" id="GO:0001706">
    <property type="term" value="P:endoderm formation"/>
    <property type="evidence" value="ECO:0000314"/>
    <property type="project" value="UniProtKB"/>
</dbReference>
<dbReference type="GO" id="GO:0007493">
    <property type="term" value="P:endodermal cell fate determination"/>
    <property type="evidence" value="ECO:0007669"/>
    <property type="project" value="Ensembl"/>
</dbReference>
<dbReference type="GO" id="GO:0001714">
    <property type="term" value="P:endodermal cell fate specification"/>
    <property type="evidence" value="ECO:0000250"/>
    <property type="project" value="BHF-UCL"/>
</dbReference>
<dbReference type="GO" id="GO:0061031">
    <property type="term" value="P:endodermal digestive tract morphogenesis"/>
    <property type="evidence" value="ECO:0000250"/>
    <property type="project" value="BHF-UCL"/>
</dbReference>
<dbReference type="GO" id="GO:0061010">
    <property type="term" value="P:gallbladder development"/>
    <property type="evidence" value="ECO:0007669"/>
    <property type="project" value="Ensembl"/>
</dbReference>
<dbReference type="GO" id="GO:0010467">
    <property type="term" value="P:gene expression"/>
    <property type="evidence" value="ECO:0007669"/>
    <property type="project" value="Ensembl"/>
</dbReference>
<dbReference type="GO" id="GO:0007507">
    <property type="term" value="P:heart development"/>
    <property type="evidence" value="ECO:0000250"/>
    <property type="project" value="ARUK-UCL"/>
</dbReference>
<dbReference type="GO" id="GO:0060914">
    <property type="term" value="P:heart formation"/>
    <property type="evidence" value="ECO:0000304"/>
    <property type="project" value="BHF-UCL"/>
</dbReference>
<dbReference type="GO" id="GO:0001947">
    <property type="term" value="P:heart looping"/>
    <property type="evidence" value="ECO:0000250"/>
    <property type="project" value="UniProtKB"/>
</dbReference>
<dbReference type="GO" id="GO:0001828">
    <property type="term" value="P:inner cell mass cellular morphogenesis"/>
    <property type="evidence" value="ECO:0007669"/>
    <property type="project" value="Ensembl"/>
</dbReference>
<dbReference type="GO" id="GO:0001656">
    <property type="term" value="P:metanephros development"/>
    <property type="evidence" value="ECO:0000315"/>
    <property type="project" value="BHF-UCL"/>
</dbReference>
<dbReference type="GO" id="GO:0090090">
    <property type="term" value="P:negative regulation of canonical Wnt signaling pathway"/>
    <property type="evidence" value="ECO:0000315"/>
    <property type="project" value="BHF-UCL"/>
</dbReference>
<dbReference type="GO" id="GO:0030308">
    <property type="term" value="P:negative regulation of cell growth"/>
    <property type="evidence" value="ECO:0000315"/>
    <property type="project" value="BHF-UCL"/>
</dbReference>
<dbReference type="GO" id="GO:0003151">
    <property type="term" value="P:outflow tract morphogenesis"/>
    <property type="evidence" value="ECO:0000250"/>
    <property type="project" value="BHF-UCL"/>
</dbReference>
<dbReference type="GO" id="GO:0045893">
    <property type="term" value="P:positive regulation of DNA-templated transcription"/>
    <property type="evidence" value="ECO:0000250"/>
    <property type="project" value="BHF-UCL"/>
</dbReference>
<dbReference type="GO" id="GO:1903226">
    <property type="term" value="P:positive regulation of endodermal cell differentiation"/>
    <property type="evidence" value="ECO:0007669"/>
    <property type="project" value="Ensembl"/>
</dbReference>
<dbReference type="GO" id="GO:0010628">
    <property type="term" value="P:positive regulation of gene expression"/>
    <property type="evidence" value="ECO:0007669"/>
    <property type="project" value="Ensembl"/>
</dbReference>
<dbReference type="GO" id="GO:0045732">
    <property type="term" value="P:positive regulation of protein catabolic process"/>
    <property type="evidence" value="ECO:0007669"/>
    <property type="project" value="Ensembl"/>
</dbReference>
<dbReference type="GO" id="GO:2000738">
    <property type="term" value="P:positive regulation of stem cell differentiation"/>
    <property type="evidence" value="ECO:0007669"/>
    <property type="project" value="Ensembl"/>
</dbReference>
<dbReference type="GO" id="GO:0045944">
    <property type="term" value="P:positive regulation of transcription by RNA polymerase II"/>
    <property type="evidence" value="ECO:0000314"/>
    <property type="project" value="BHF-UCL"/>
</dbReference>
<dbReference type="GO" id="GO:0031648">
    <property type="term" value="P:protein destabilization"/>
    <property type="evidence" value="ECO:0000315"/>
    <property type="project" value="BHF-UCL"/>
</dbReference>
<dbReference type="GO" id="GO:0050821">
    <property type="term" value="P:protein stabilization"/>
    <property type="evidence" value="ECO:0000315"/>
    <property type="project" value="BHF-UCL"/>
</dbReference>
<dbReference type="GO" id="GO:2000043">
    <property type="term" value="P:regulation of cardiac cell fate specification"/>
    <property type="evidence" value="ECO:0000250"/>
    <property type="project" value="ARUK-UCL"/>
</dbReference>
<dbReference type="GO" id="GO:0006355">
    <property type="term" value="P:regulation of DNA-templated transcription"/>
    <property type="evidence" value="ECO:0000250"/>
    <property type="project" value="UniProtKB"/>
</dbReference>
<dbReference type="GO" id="GO:0045995">
    <property type="term" value="P:regulation of embryonic development"/>
    <property type="evidence" value="ECO:0000250"/>
    <property type="project" value="UniProtKB"/>
</dbReference>
<dbReference type="GO" id="GO:2000035">
    <property type="term" value="P:regulation of stem cell division"/>
    <property type="evidence" value="ECO:0007669"/>
    <property type="project" value="Ensembl"/>
</dbReference>
<dbReference type="GO" id="GO:0072091">
    <property type="term" value="P:regulation of stem cell proliferation"/>
    <property type="evidence" value="ECO:0007669"/>
    <property type="project" value="Ensembl"/>
</dbReference>
<dbReference type="GO" id="GO:0006357">
    <property type="term" value="P:regulation of transcription by RNA polymerase II"/>
    <property type="evidence" value="ECO:0000250"/>
    <property type="project" value="BHF-UCL"/>
</dbReference>
<dbReference type="GO" id="GO:0043279">
    <property type="term" value="P:response to alkaloid"/>
    <property type="evidence" value="ECO:0007669"/>
    <property type="project" value="Ensembl"/>
</dbReference>
<dbReference type="GO" id="GO:0021903">
    <property type="term" value="P:rostrocaudal neural tube patterning"/>
    <property type="evidence" value="ECO:0007669"/>
    <property type="project" value="Ensembl"/>
</dbReference>
<dbReference type="GO" id="GO:0023019">
    <property type="term" value="P:signal transduction involved in regulation of gene expression"/>
    <property type="evidence" value="ECO:0007669"/>
    <property type="project" value="Ensembl"/>
</dbReference>
<dbReference type="GO" id="GO:0007283">
    <property type="term" value="P:spermatogenesis"/>
    <property type="evidence" value="ECO:0007669"/>
    <property type="project" value="Ensembl"/>
</dbReference>
<dbReference type="GO" id="GO:0048866">
    <property type="term" value="P:stem cell fate specification"/>
    <property type="evidence" value="ECO:0007669"/>
    <property type="project" value="Ensembl"/>
</dbReference>
<dbReference type="GO" id="GO:0072189">
    <property type="term" value="P:ureter development"/>
    <property type="evidence" value="ECO:0000315"/>
    <property type="project" value="BHF-UCL"/>
</dbReference>
<dbReference type="GO" id="GO:0001570">
    <property type="term" value="P:vasculogenesis"/>
    <property type="evidence" value="ECO:0000250"/>
    <property type="project" value="BHF-UCL"/>
</dbReference>
<dbReference type="GO" id="GO:0016055">
    <property type="term" value="P:Wnt signaling pathway"/>
    <property type="evidence" value="ECO:0007669"/>
    <property type="project" value="UniProtKB-KW"/>
</dbReference>
<dbReference type="CDD" id="cd22047">
    <property type="entry name" value="HMG-box_SoxF_SOX17"/>
    <property type="match status" value="1"/>
</dbReference>
<dbReference type="FunFam" id="1.10.30.10:FF:000008">
    <property type="entry name" value="transcription factor SOX-7"/>
    <property type="match status" value="1"/>
</dbReference>
<dbReference type="Gene3D" id="1.10.30.10">
    <property type="entry name" value="High mobility group box domain"/>
    <property type="match status" value="1"/>
</dbReference>
<dbReference type="InterPro" id="IPR009071">
    <property type="entry name" value="HMG_box_dom"/>
</dbReference>
<dbReference type="InterPro" id="IPR036910">
    <property type="entry name" value="HMG_box_dom_sf"/>
</dbReference>
<dbReference type="InterPro" id="IPR033392">
    <property type="entry name" value="Sox7/17/18_central"/>
</dbReference>
<dbReference type="InterPro" id="IPR021934">
    <property type="entry name" value="Sox_C"/>
</dbReference>
<dbReference type="InterPro" id="IPR050140">
    <property type="entry name" value="SRY-related_HMG-box_TF-like"/>
</dbReference>
<dbReference type="PANTHER" id="PTHR10270">
    <property type="entry name" value="SOX TRANSCRIPTION FACTOR"/>
    <property type="match status" value="1"/>
</dbReference>
<dbReference type="PANTHER" id="PTHR10270:SF216">
    <property type="entry name" value="TRANSCRIPTION FACTOR SOX-17"/>
    <property type="match status" value="1"/>
</dbReference>
<dbReference type="Pfam" id="PF00505">
    <property type="entry name" value="HMG_box"/>
    <property type="match status" value="1"/>
</dbReference>
<dbReference type="Pfam" id="PF12067">
    <property type="entry name" value="Sox17_18_mid"/>
    <property type="match status" value="1"/>
</dbReference>
<dbReference type="SMART" id="SM00398">
    <property type="entry name" value="HMG"/>
    <property type="match status" value="1"/>
</dbReference>
<dbReference type="SUPFAM" id="SSF47095">
    <property type="entry name" value="HMG-box"/>
    <property type="match status" value="1"/>
</dbReference>
<dbReference type="PROSITE" id="PS50118">
    <property type="entry name" value="HMG_BOX_2"/>
    <property type="match status" value="1"/>
</dbReference>
<dbReference type="PROSITE" id="PS51516">
    <property type="entry name" value="SOX_C"/>
    <property type="match status" value="1"/>
</dbReference>
<protein>
    <recommendedName>
        <fullName>Transcription factor SOX-17</fullName>
    </recommendedName>
</protein>
<feature type="chain" id="PRO_0000048765" description="Transcription factor SOX-17">
    <location>
        <begin position="1"/>
        <end position="414"/>
    </location>
</feature>
<feature type="domain" description="Sox C-terminal" evidence="3">
    <location>
        <begin position="280"/>
        <end position="413"/>
    </location>
</feature>
<feature type="DNA-binding region" description="HMG box" evidence="2">
    <location>
        <begin position="68"/>
        <end position="136"/>
    </location>
</feature>
<feature type="region of interest" description="Disordered" evidence="4">
    <location>
        <begin position="1"/>
        <end position="22"/>
    </location>
</feature>
<feature type="region of interest" description="Disordered" evidence="4">
    <location>
        <begin position="36"/>
        <end position="66"/>
    </location>
</feature>
<feature type="region of interest" description="Disordered" evidence="4">
    <location>
        <begin position="256"/>
        <end position="286"/>
    </location>
</feature>
<feature type="region of interest" description="Disordered" evidence="4">
    <location>
        <begin position="305"/>
        <end position="352"/>
    </location>
</feature>
<feature type="short sequence motif" description="9aaTAD" evidence="8">
    <location>
        <begin position="361"/>
        <end position="369"/>
    </location>
</feature>
<feature type="compositionally biased region" description="Low complexity" evidence="4">
    <location>
        <begin position="47"/>
        <end position="61"/>
    </location>
</feature>
<feature type="compositionally biased region" description="Pro residues" evidence="4">
    <location>
        <begin position="327"/>
        <end position="339"/>
    </location>
</feature>
<feature type="sequence variant" id="VAR_065168" description="In VUR3." evidence="6">
    <original>Q</original>
    <variation>QTQ</variation>
    <location>
        <position position="17"/>
    </location>
</feature>
<feature type="sequence variant" id="VAR_078774" description="In dbSNP:rs189384157." evidence="7">
    <original>A</original>
    <variation>D</variation>
    <location>
        <position position="33"/>
    </location>
</feature>
<feature type="sequence variant" id="VAR_065169" description="In VUR3; dbSNP:rs267607082." evidence="6">
    <original>G</original>
    <variation>C</variation>
    <location>
        <position position="178"/>
    </location>
</feature>
<feature type="sequence variant" id="VAR_065170" description="In VUR3; increased levels of the mutant protein that is associated with increased suppression of CTNNB1 signaling of the Wnt pathway compared to wild-type; dbSNP:rs267607083." evidence="6">
    <original>Y</original>
    <variation>N</variation>
    <location>
        <position position="259"/>
    </location>
</feature>
<feature type="helix" evidence="9">
    <location>
        <begin position="74"/>
        <end position="87"/>
    </location>
</feature>
<feature type="helix" evidence="9">
    <location>
        <begin position="95"/>
        <end position="108"/>
    </location>
</feature>
<feature type="helix" evidence="9">
    <location>
        <begin position="111"/>
        <end position="129"/>
    </location>
</feature>
<keyword id="KW-0002">3D-structure</keyword>
<keyword id="KW-0010">Activator</keyword>
<keyword id="KW-0225">Disease variant</keyword>
<keyword id="KW-0238">DNA-binding</keyword>
<keyword id="KW-0539">Nucleus</keyword>
<keyword id="KW-1267">Proteomics identification</keyword>
<keyword id="KW-1185">Reference proteome</keyword>
<keyword id="KW-0804">Transcription</keyword>
<keyword id="KW-0805">Transcription regulation</keyword>
<keyword id="KW-0879">Wnt signaling pathway</keyword>
<gene>
    <name type="primary">SOX17</name>
</gene>